<evidence type="ECO:0000255" key="1">
    <source>
        <dbReference type="HAMAP-Rule" id="MF_01664"/>
    </source>
</evidence>
<comment type="function">
    <text evidence="1">Catalyzes the conversion of heme O to heme A by two successive hydroxylations of the methyl group at C8. The first hydroxylation forms heme I, the second hydroxylation results in an unstable dihydroxymethyl group, which spontaneously dehydrates, resulting in the formyl group of heme A.</text>
</comment>
<comment type="catalytic activity">
    <reaction evidence="1">
        <text>Fe(II)-heme o + 2 A + H2O = Fe(II)-heme a + 2 AH2</text>
        <dbReference type="Rhea" id="RHEA:63388"/>
        <dbReference type="ChEBI" id="CHEBI:13193"/>
        <dbReference type="ChEBI" id="CHEBI:15377"/>
        <dbReference type="ChEBI" id="CHEBI:17499"/>
        <dbReference type="ChEBI" id="CHEBI:60530"/>
        <dbReference type="ChEBI" id="CHEBI:61715"/>
        <dbReference type="EC" id="1.17.99.9"/>
    </reaction>
    <physiologicalReaction direction="left-to-right" evidence="1">
        <dbReference type="Rhea" id="RHEA:63389"/>
    </physiologicalReaction>
</comment>
<comment type="cofactor">
    <cofactor evidence="1">
        <name>heme b</name>
        <dbReference type="ChEBI" id="CHEBI:60344"/>
    </cofactor>
</comment>
<comment type="pathway">
    <text evidence="1">Porphyrin-containing compound metabolism; heme A biosynthesis; heme A from heme O: step 1/1.</text>
</comment>
<comment type="subunit">
    <text evidence="1">Interacts with CtaB.</text>
</comment>
<comment type="subcellular location">
    <subcellularLocation>
        <location evidence="1">Cell membrane</location>
        <topology evidence="1">Multi-pass membrane protein</topology>
    </subcellularLocation>
</comment>
<comment type="domain">
    <text evidence="1">The N-half (TM1-TM4) and C-half (TM5-TM8) domains are connected by an intracellular loop. Each domain is formed from four-helix bundles and they align in a pseudo twofold symmetry manner. The N-half domain is the substrate-heme O binding domain and the C-half domain is the cofactor heme B binding domain.</text>
</comment>
<comment type="domain">
    <text evidence="1">The cysteines of disulfide bond Cys-35 and Cys-42 may be involved in transfer of reducing equivalents from quinol in the membrane to the active site of the enzyme.</text>
</comment>
<comment type="similarity">
    <text evidence="1">Belongs to the COX15/CtaA family. Type 1 subfamily.</text>
</comment>
<protein>
    <recommendedName>
        <fullName evidence="1">Heme A synthase</fullName>
        <shortName evidence="1">HAS</shortName>
        <ecNumber evidence="1">1.17.99.9</ecNumber>
    </recommendedName>
    <alternativeName>
        <fullName evidence="1">Cytochrome aa3-controlling protein</fullName>
    </alternativeName>
</protein>
<name>CTAA_EXIS2</name>
<reference key="1">
    <citation type="submission" date="2008-04" db="EMBL/GenBank/DDBJ databases">
        <title>Complete sequence of chromosome of Exiguobacterium sibiricum 255-15.</title>
        <authorList>
            <consortium name="US DOE Joint Genome Institute"/>
            <person name="Copeland A."/>
            <person name="Lucas S."/>
            <person name="Lapidus A."/>
            <person name="Glavina del Rio T."/>
            <person name="Dalin E."/>
            <person name="Tice H."/>
            <person name="Bruce D."/>
            <person name="Goodwin L."/>
            <person name="Pitluck S."/>
            <person name="Kiss H."/>
            <person name="Chertkov O."/>
            <person name="Monk C."/>
            <person name="Brettin T."/>
            <person name="Detter J.C."/>
            <person name="Han C."/>
            <person name="Kuske C.R."/>
            <person name="Schmutz J."/>
            <person name="Larimer F."/>
            <person name="Land M."/>
            <person name="Hauser L."/>
            <person name="Kyrpides N."/>
            <person name="Mikhailova N."/>
            <person name="Vishnivetskaya T."/>
            <person name="Rodrigues D.F."/>
            <person name="Gilichinsky D."/>
            <person name="Tiedje J."/>
            <person name="Richardson P."/>
        </authorList>
    </citation>
    <scope>NUCLEOTIDE SEQUENCE [LARGE SCALE GENOMIC DNA]</scope>
    <source>
        <strain>DSM 17290 / CCUG 55495 / CIP 109462 / JCM 13490 / 255-15</strain>
    </source>
</reference>
<sequence length="297" mass="33310">MNRKLSIFSAFVTFTMMIVLLMGGTVTKTDSGNGCGTDWPLCHGELIPTNPSVETMIEYSHRAVTGVVGLLIIALCLWTLVAFKDRLDIKIFAFLAFIFMLIQSIVGAGAVVWQQSDLVMALHFGISLISFASLLILTILIMERSGQEFRESVPAFLRKLLYGLLIYTLIVVYTGAFVRHVGATYACVGWPVCSQPTMTFEAWVQMIHRILAGLLFFYTLFVHYTAIRLKHRTSRTGMLFATFFISCQVATGAWIVLGGHATYVPLLHAFLITCYFGVISYLAYHAFRTRKKDSRLR</sequence>
<keyword id="KW-1003">Cell membrane</keyword>
<keyword id="KW-1015">Disulfide bond</keyword>
<keyword id="KW-0350">Heme biosynthesis</keyword>
<keyword id="KW-0408">Iron</keyword>
<keyword id="KW-0472">Membrane</keyword>
<keyword id="KW-0479">Metal-binding</keyword>
<keyword id="KW-0560">Oxidoreductase</keyword>
<keyword id="KW-1185">Reference proteome</keyword>
<keyword id="KW-0812">Transmembrane</keyword>
<keyword id="KW-1133">Transmembrane helix</keyword>
<organism>
    <name type="scientific">Exiguobacterium sibiricum (strain DSM 17290 / CCUG 55495 / CIP 109462 / JCM 13490 / 255-15)</name>
    <dbReference type="NCBI Taxonomy" id="262543"/>
    <lineage>
        <taxon>Bacteria</taxon>
        <taxon>Bacillati</taxon>
        <taxon>Bacillota</taxon>
        <taxon>Bacilli</taxon>
        <taxon>Bacillales</taxon>
        <taxon>Bacillales Family XII. Incertae Sedis</taxon>
        <taxon>Exiguobacterium</taxon>
    </lineage>
</organism>
<gene>
    <name evidence="1" type="primary">ctaA</name>
    <name type="ordered locus">Exig_1990</name>
</gene>
<dbReference type="EC" id="1.17.99.9" evidence="1"/>
<dbReference type="EMBL" id="CP001022">
    <property type="protein sequence ID" value="ACB61442.1"/>
    <property type="molecule type" value="Genomic_DNA"/>
</dbReference>
<dbReference type="RefSeq" id="WP_012370860.1">
    <property type="nucleotide sequence ID" value="NC_010556.1"/>
</dbReference>
<dbReference type="SMR" id="B1YIW6"/>
<dbReference type="STRING" id="262543.Exig_1990"/>
<dbReference type="KEGG" id="esi:Exig_1990"/>
<dbReference type="eggNOG" id="COG1612">
    <property type="taxonomic scope" value="Bacteria"/>
</dbReference>
<dbReference type="HOGENOM" id="CLU_041525_3_0_9"/>
<dbReference type="OrthoDB" id="9816428at2"/>
<dbReference type="UniPathway" id="UPA00269">
    <property type="reaction ID" value="UER00713"/>
</dbReference>
<dbReference type="Proteomes" id="UP000001681">
    <property type="component" value="Chromosome"/>
</dbReference>
<dbReference type="GO" id="GO:0005886">
    <property type="term" value="C:plasma membrane"/>
    <property type="evidence" value="ECO:0007669"/>
    <property type="project" value="UniProtKB-SubCell"/>
</dbReference>
<dbReference type="GO" id="GO:0046872">
    <property type="term" value="F:metal ion binding"/>
    <property type="evidence" value="ECO:0007669"/>
    <property type="project" value="UniProtKB-KW"/>
</dbReference>
<dbReference type="GO" id="GO:0016653">
    <property type="term" value="F:oxidoreductase activity, acting on NAD(P)H, heme protein as acceptor"/>
    <property type="evidence" value="ECO:0007669"/>
    <property type="project" value="InterPro"/>
</dbReference>
<dbReference type="GO" id="GO:0006784">
    <property type="term" value="P:heme A biosynthetic process"/>
    <property type="evidence" value="ECO:0007669"/>
    <property type="project" value="UniProtKB-UniRule"/>
</dbReference>
<dbReference type="HAMAP" id="MF_01664">
    <property type="entry name" value="HemeA_synth_type1"/>
    <property type="match status" value="1"/>
</dbReference>
<dbReference type="InterPro" id="IPR003780">
    <property type="entry name" value="COX15/CtaA_fam"/>
</dbReference>
<dbReference type="InterPro" id="IPR050450">
    <property type="entry name" value="COX15/CtaA_HemeA_synthase"/>
</dbReference>
<dbReference type="InterPro" id="IPR023755">
    <property type="entry name" value="HemeA_Synthase_type1"/>
</dbReference>
<dbReference type="PANTHER" id="PTHR35457">
    <property type="entry name" value="HEME A SYNTHASE"/>
    <property type="match status" value="1"/>
</dbReference>
<dbReference type="PANTHER" id="PTHR35457:SF1">
    <property type="entry name" value="HEME A SYNTHASE"/>
    <property type="match status" value="1"/>
</dbReference>
<dbReference type="Pfam" id="PF02628">
    <property type="entry name" value="COX15-CtaA"/>
    <property type="match status" value="1"/>
</dbReference>
<proteinExistence type="inferred from homology"/>
<accession>B1YIW6</accession>
<feature type="chain" id="PRO_0000348978" description="Heme A synthase">
    <location>
        <begin position="1"/>
        <end position="297"/>
    </location>
</feature>
<feature type="topological domain" description="Cytoplasmic" evidence="1">
    <location>
        <begin position="1"/>
        <end position="6"/>
    </location>
</feature>
<feature type="transmembrane region" description="Helical" evidence="1">
    <location>
        <begin position="7"/>
        <end position="27"/>
    </location>
</feature>
<feature type="topological domain" description="Extracellular" evidence="1">
    <location>
        <begin position="28"/>
        <end position="62"/>
    </location>
</feature>
<feature type="transmembrane region" description="Helical" evidence="1">
    <location>
        <begin position="63"/>
        <end position="83"/>
    </location>
</feature>
<feature type="topological domain" description="Cytoplasmic" evidence="1">
    <location>
        <begin position="84"/>
        <end position="90"/>
    </location>
</feature>
<feature type="transmembrane region" description="Helical" evidence="1">
    <location>
        <begin position="91"/>
        <end position="111"/>
    </location>
</feature>
<feature type="topological domain" description="Extracellular" evidence="1">
    <location>
        <begin position="112"/>
        <end position="121"/>
    </location>
</feature>
<feature type="transmembrane region" description="Helical" evidence="1">
    <location>
        <begin position="122"/>
        <end position="142"/>
    </location>
</feature>
<feature type="topological domain" description="Cytoplasmic" evidence="1">
    <location>
        <begin position="143"/>
        <end position="160"/>
    </location>
</feature>
<feature type="transmembrane region" description="Helical" evidence="1">
    <location>
        <begin position="161"/>
        <end position="181"/>
    </location>
</feature>
<feature type="topological domain" description="Extracellular" evidence="1">
    <location>
        <begin position="182"/>
        <end position="201"/>
    </location>
</feature>
<feature type="transmembrane region" description="Helical" evidence="1">
    <location>
        <begin position="202"/>
        <end position="222"/>
    </location>
</feature>
<feature type="topological domain" description="Cytoplasmic" evidence="1">
    <location>
        <begin position="223"/>
        <end position="236"/>
    </location>
</feature>
<feature type="transmembrane region" description="Helical" evidence="1">
    <location>
        <begin position="237"/>
        <end position="257"/>
    </location>
</feature>
<feature type="topological domain" description="Extracellular" evidence="1">
    <location>
        <begin position="258"/>
        <end position="262"/>
    </location>
</feature>
<feature type="transmembrane region" description="Helical" evidence="1">
    <location>
        <begin position="263"/>
        <end position="283"/>
    </location>
</feature>
<feature type="topological domain" description="Cytoplasmic" evidence="1">
    <location>
        <begin position="284"/>
        <end position="297"/>
    </location>
</feature>
<feature type="active site" evidence="1">
    <location>
        <position position="58"/>
    </location>
</feature>
<feature type="binding site" description="axial binding residue" evidence="1">
    <location>
        <position position="61"/>
    </location>
    <ligand>
        <name>heme o</name>
        <dbReference type="ChEBI" id="CHEBI:24480"/>
    </ligand>
    <ligandPart>
        <name>Fe</name>
        <dbReference type="ChEBI" id="CHEBI:18248"/>
    </ligandPart>
</feature>
<feature type="binding site" description="axial binding residue" evidence="1">
    <location>
        <position position="123"/>
    </location>
    <ligand>
        <name>heme o</name>
        <dbReference type="ChEBI" id="CHEBI:24480"/>
    </ligand>
    <ligandPart>
        <name>Fe</name>
        <dbReference type="ChEBI" id="CHEBI:18248"/>
    </ligandPart>
</feature>
<feature type="binding site" description="axial binding residue" evidence="1">
    <location>
        <position position="208"/>
    </location>
    <ligand>
        <name>heme b</name>
        <dbReference type="ChEBI" id="CHEBI:60344"/>
    </ligand>
    <ligandPart>
        <name>Fe</name>
        <dbReference type="ChEBI" id="CHEBI:18248"/>
    </ligandPart>
</feature>
<feature type="binding site" description="axial binding residue" evidence="1">
    <location>
        <position position="268"/>
    </location>
    <ligand>
        <name>heme b</name>
        <dbReference type="ChEBI" id="CHEBI:60344"/>
    </ligand>
    <ligandPart>
        <name>Fe</name>
        <dbReference type="ChEBI" id="CHEBI:18248"/>
    </ligandPart>
</feature>
<feature type="disulfide bond" description="Essential for catalytic activity" evidence="1">
    <location>
        <begin position="35"/>
        <end position="42"/>
    </location>
</feature>
<feature type="disulfide bond" evidence="1">
    <location>
        <begin position="187"/>
        <end position="193"/>
    </location>
</feature>